<dbReference type="EC" id="3.4.19.3" evidence="1"/>
<dbReference type="EMBL" id="CP000653">
    <property type="protein sequence ID" value="ABP59900.1"/>
    <property type="molecule type" value="Genomic_DNA"/>
</dbReference>
<dbReference type="RefSeq" id="WP_012016619.1">
    <property type="nucleotide sequence ID" value="NC_009436.1"/>
</dbReference>
<dbReference type="SMR" id="A4W870"/>
<dbReference type="STRING" id="399742.Ent638_1219"/>
<dbReference type="MEROPS" id="C15.001"/>
<dbReference type="KEGG" id="ent:Ent638_1219"/>
<dbReference type="eggNOG" id="COG2039">
    <property type="taxonomic scope" value="Bacteria"/>
</dbReference>
<dbReference type="HOGENOM" id="CLU_043960_4_0_6"/>
<dbReference type="OrthoDB" id="9779738at2"/>
<dbReference type="Proteomes" id="UP000000230">
    <property type="component" value="Chromosome"/>
</dbReference>
<dbReference type="GO" id="GO:0005829">
    <property type="term" value="C:cytosol"/>
    <property type="evidence" value="ECO:0007669"/>
    <property type="project" value="InterPro"/>
</dbReference>
<dbReference type="GO" id="GO:0016920">
    <property type="term" value="F:pyroglutamyl-peptidase activity"/>
    <property type="evidence" value="ECO:0007669"/>
    <property type="project" value="UniProtKB-UniRule"/>
</dbReference>
<dbReference type="GO" id="GO:0006508">
    <property type="term" value="P:proteolysis"/>
    <property type="evidence" value="ECO:0007669"/>
    <property type="project" value="UniProtKB-KW"/>
</dbReference>
<dbReference type="CDD" id="cd00501">
    <property type="entry name" value="Peptidase_C15"/>
    <property type="match status" value="1"/>
</dbReference>
<dbReference type="FunFam" id="3.40.630.20:FF:000001">
    <property type="entry name" value="Pyrrolidone-carboxylate peptidase"/>
    <property type="match status" value="1"/>
</dbReference>
<dbReference type="Gene3D" id="3.40.630.20">
    <property type="entry name" value="Peptidase C15, pyroglutamyl peptidase I-like"/>
    <property type="match status" value="1"/>
</dbReference>
<dbReference type="HAMAP" id="MF_00417">
    <property type="entry name" value="Pyrrolid_peptidase"/>
    <property type="match status" value="1"/>
</dbReference>
<dbReference type="InterPro" id="IPR000816">
    <property type="entry name" value="Peptidase_C15"/>
</dbReference>
<dbReference type="InterPro" id="IPR016125">
    <property type="entry name" value="Peptidase_C15-like"/>
</dbReference>
<dbReference type="InterPro" id="IPR036440">
    <property type="entry name" value="Peptidase_C15-like_sf"/>
</dbReference>
<dbReference type="InterPro" id="IPR029762">
    <property type="entry name" value="PGP-I_bact-type"/>
</dbReference>
<dbReference type="InterPro" id="IPR033694">
    <property type="entry name" value="PGPEP1_Cys_AS"/>
</dbReference>
<dbReference type="InterPro" id="IPR033693">
    <property type="entry name" value="PGPEP1_Glu_AS"/>
</dbReference>
<dbReference type="NCBIfam" id="NF009676">
    <property type="entry name" value="PRK13197.1"/>
    <property type="match status" value="1"/>
</dbReference>
<dbReference type="NCBIfam" id="TIGR00504">
    <property type="entry name" value="pyro_pdase"/>
    <property type="match status" value="1"/>
</dbReference>
<dbReference type="PANTHER" id="PTHR23402">
    <property type="entry name" value="PROTEASE FAMILY C15 PYROGLUTAMYL-PEPTIDASE I-RELATED"/>
    <property type="match status" value="1"/>
</dbReference>
<dbReference type="PANTHER" id="PTHR23402:SF1">
    <property type="entry name" value="PYROGLUTAMYL-PEPTIDASE I"/>
    <property type="match status" value="1"/>
</dbReference>
<dbReference type="Pfam" id="PF01470">
    <property type="entry name" value="Peptidase_C15"/>
    <property type="match status" value="1"/>
</dbReference>
<dbReference type="PIRSF" id="PIRSF015592">
    <property type="entry name" value="Prld-crbxl_pptds"/>
    <property type="match status" value="1"/>
</dbReference>
<dbReference type="PRINTS" id="PR00706">
    <property type="entry name" value="PYROGLUPTASE"/>
</dbReference>
<dbReference type="SUPFAM" id="SSF53182">
    <property type="entry name" value="Pyrrolidone carboxyl peptidase (pyroglutamate aminopeptidase)"/>
    <property type="match status" value="1"/>
</dbReference>
<dbReference type="PROSITE" id="PS01334">
    <property type="entry name" value="PYRASE_CYS"/>
    <property type="match status" value="1"/>
</dbReference>
<dbReference type="PROSITE" id="PS01333">
    <property type="entry name" value="PYRASE_GLU"/>
    <property type="match status" value="1"/>
</dbReference>
<organism>
    <name type="scientific">Enterobacter sp. (strain 638)</name>
    <dbReference type="NCBI Taxonomy" id="399742"/>
    <lineage>
        <taxon>Bacteria</taxon>
        <taxon>Pseudomonadati</taxon>
        <taxon>Pseudomonadota</taxon>
        <taxon>Gammaproteobacteria</taxon>
        <taxon>Enterobacterales</taxon>
        <taxon>Enterobacteriaceae</taxon>
        <taxon>Enterobacter</taxon>
    </lineage>
</organism>
<evidence type="ECO:0000255" key="1">
    <source>
        <dbReference type="HAMAP-Rule" id="MF_00417"/>
    </source>
</evidence>
<sequence>MRHILVTGFEPFGGETLNPSWEVVKQLEGMTIDDCRVVTRQLPCVFGESLTLLNSAIDELNPTVVIAVGQAGGRVDITVERVGINVDDARIPDNRGQQPIDVAIVPDGPAAWFSSLPIKAMVAAMREKGIPASVSQTAGTFVCNHVMYGLLHKIRERTNVKGGFIHIPYLPEQAAAHAGAPSMATQTVKAALEIALTVALRQSSDINAVGGATH</sequence>
<comment type="function">
    <text evidence="1">Removes 5-oxoproline from various penultimate amino acid residues except L-proline.</text>
</comment>
<comment type="catalytic activity">
    <reaction evidence="1">
        <text>Release of an N-terminal pyroglutamyl group from a polypeptide, the second amino acid generally not being Pro.</text>
        <dbReference type="EC" id="3.4.19.3"/>
    </reaction>
</comment>
<comment type="subunit">
    <text evidence="1">Homotetramer.</text>
</comment>
<comment type="subcellular location">
    <subcellularLocation>
        <location evidence="1">Cytoplasm</location>
    </subcellularLocation>
</comment>
<comment type="similarity">
    <text evidence="1">Belongs to the peptidase C15 family.</text>
</comment>
<keyword id="KW-0963">Cytoplasm</keyword>
<keyword id="KW-0378">Hydrolase</keyword>
<keyword id="KW-0645">Protease</keyword>
<keyword id="KW-0788">Thiol protease</keyword>
<accession>A4W870</accession>
<feature type="chain" id="PRO_1000060080" description="Pyrrolidone-carboxylate peptidase">
    <location>
        <begin position="1"/>
        <end position="214"/>
    </location>
</feature>
<feature type="active site" evidence="1">
    <location>
        <position position="80"/>
    </location>
</feature>
<feature type="active site" evidence="1">
    <location>
        <position position="143"/>
    </location>
</feature>
<feature type="active site" evidence="1">
    <location>
        <position position="166"/>
    </location>
</feature>
<reference key="1">
    <citation type="journal article" date="2010" name="PLoS Genet.">
        <title>Genome sequence of the plant growth promoting endophytic bacterium Enterobacter sp. 638.</title>
        <authorList>
            <person name="Taghavi S."/>
            <person name="van der Lelie D."/>
            <person name="Hoffman A."/>
            <person name="Zhang Y.B."/>
            <person name="Walla M.D."/>
            <person name="Vangronsveld J."/>
            <person name="Newman L."/>
            <person name="Monchy S."/>
        </authorList>
    </citation>
    <scope>NUCLEOTIDE SEQUENCE [LARGE SCALE GENOMIC DNA]</scope>
    <source>
        <strain>638</strain>
    </source>
</reference>
<proteinExistence type="inferred from homology"/>
<gene>
    <name evidence="1" type="primary">pcp</name>
    <name type="ordered locus">Ent638_1219</name>
</gene>
<protein>
    <recommendedName>
        <fullName evidence="1">Pyrrolidone-carboxylate peptidase</fullName>
        <ecNumber evidence="1">3.4.19.3</ecNumber>
    </recommendedName>
    <alternativeName>
        <fullName evidence="1">5-oxoprolyl-peptidase</fullName>
    </alternativeName>
    <alternativeName>
        <fullName evidence="1">Pyroglutamyl-peptidase I</fullName>
        <shortName evidence="1">PGP-I</shortName>
        <shortName evidence="1">Pyrase</shortName>
    </alternativeName>
</protein>
<name>PCP_ENT38</name>